<keyword id="KW-0285">Flavoprotein</keyword>
<keyword id="KW-0288">FMN</keyword>
<keyword id="KW-0560">Oxidoreductase</keyword>
<keyword id="KW-1185">Reference proteome</keyword>
<reference key="1">
    <citation type="journal article" date="2001" name="DNA Res.">
        <title>Complete genomic sequence of the filamentous nitrogen-fixing cyanobacterium Anabaena sp. strain PCC 7120.</title>
        <authorList>
            <person name="Kaneko T."/>
            <person name="Nakamura Y."/>
            <person name="Wolk C.P."/>
            <person name="Kuritz T."/>
            <person name="Sasamoto S."/>
            <person name="Watanabe A."/>
            <person name="Iriguchi M."/>
            <person name="Ishikawa A."/>
            <person name="Kawashima K."/>
            <person name="Kimura T."/>
            <person name="Kishida Y."/>
            <person name="Kohara M."/>
            <person name="Matsumoto M."/>
            <person name="Matsuno A."/>
            <person name="Muraki A."/>
            <person name="Nakazaki N."/>
            <person name="Shimpo S."/>
            <person name="Sugimoto M."/>
            <person name="Takazawa M."/>
            <person name="Yamada M."/>
            <person name="Yasuda M."/>
            <person name="Tabata S."/>
        </authorList>
    </citation>
    <scope>NUCLEOTIDE SEQUENCE [LARGE SCALE GENOMIC DNA]</scope>
    <source>
        <strain>PCC 7120 / SAG 25.82 / UTEX 2576</strain>
    </source>
</reference>
<reference key="2">
    <citation type="journal article" date="2011" name="Microbiology">
        <title>Assessment of salinity-induced photorespiratory glycolate metabolism in Anabaena sp. PCC 7120.</title>
        <authorList>
            <person name="Srivastava A.K."/>
            <person name="Alexova R."/>
            <person name="Jeon Y.J."/>
            <person name="Kohli G.S."/>
            <person name="Neilan B.A."/>
        </authorList>
    </citation>
    <scope>NUCLEOTIDE SEQUENCE [GENOMIC DNA] OF 82-171</scope>
    <scope>INDUCTION</scope>
    <source>
        <strain>PCC 7120 / SAG 25.82 / UTEX 2576</strain>
    </source>
</reference>
<reference key="3">
    <citation type="journal article" date="2011" name="Plant Cell">
        <title>Cyanobacterial lactate oxidases serve as essential partners in N2 fixation and evolved into photorespiratory glycolate oxidases in plants.</title>
        <authorList>
            <person name="Hackenberg C."/>
            <person name="Kern R."/>
            <person name="Huge J."/>
            <person name="Stal L.J."/>
            <person name="Tsuji Y."/>
            <person name="Kopka J."/>
            <person name="Shiraiwa Y."/>
            <person name="Bauwe H."/>
            <person name="Hagemann M."/>
        </authorList>
    </citation>
    <scope>FUNCTION</scope>
    <scope>CATALYTIC ACTIVITY</scope>
    <scope>SUBSTRATE SPECIFICITY</scope>
    <scope>BIOPHYSICOCHEMICAL PROPERTIES</scope>
    <scope>MUTAGENESIS OF MET-82; LEU-112 AND PHE-212</scope>
    <scope>DISRUPTION PHENOTYPE</scope>
    <source>
        <strain>PCC 7120 / SAG 25.82 / UTEX 2576</strain>
    </source>
</reference>
<gene>
    <name evidence="5" type="primary">lox</name>
    <name evidence="8" type="ordered locus">all0170</name>
</gene>
<comment type="function">
    <text evidence="4">Catalyzes the oxidation of (S)-lactate (L-lactate) to pyruvate, with a reduction of O2 to H2O2. In extant N2-fixing cyanobacteria such as Nostoc, this enzyme primarily serves as an O2-scavenging enzyme, protecting nitrogenase that is extremely sensitive to O2, and is therefore an essential partner in N2 fixation. Also shows clear oxidase activity with glyoxylate in vitro, and low activity with glycerate, hydroxypyruvate and glycolate. The very low glycolate oxidase activity indicates that this enzyme is unlikely to be involved in photorespiratory glycolate metabolism, a pathway that seems to exist in this cyanobacterium, but in which the oxidation of glycolate is taken over by glycolate dehydrogenase (GlcD). Is not able to use D-lactate as substrate and does not show any dehydrogenase activity with NAD(+) or NADP(+).</text>
</comment>
<comment type="catalytic activity">
    <reaction evidence="4">
        <text>(S)-lactate + O2 = pyruvate + H2O2</text>
        <dbReference type="Rhea" id="RHEA:55868"/>
        <dbReference type="ChEBI" id="CHEBI:15361"/>
        <dbReference type="ChEBI" id="CHEBI:15379"/>
        <dbReference type="ChEBI" id="CHEBI:16240"/>
        <dbReference type="ChEBI" id="CHEBI:16651"/>
    </reaction>
    <physiologicalReaction direction="left-to-right" evidence="4">
        <dbReference type="Rhea" id="RHEA:55869"/>
    </physiologicalReaction>
</comment>
<comment type="catalytic activity">
    <reaction evidence="4">
        <text>glyoxylate + O2 + H2O = oxalate + H2O2 + H(+)</text>
        <dbReference type="Rhea" id="RHEA:14837"/>
        <dbReference type="ChEBI" id="CHEBI:15377"/>
        <dbReference type="ChEBI" id="CHEBI:15378"/>
        <dbReference type="ChEBI" id="CHEBI:15379"/>
        <dbReference type="ChEBI" id="CHEBI:16240"/>
        <dbReference type="ChEBI" id="CHEBI:30623"/>
        <dbReference type="ChEBI" id="CHEBI:36655"/>
        <dbReference type="EC" id="1.2.3.5"/>
    </reaction>
    <physiologicalReaction direction="left-to-right" evidence="4">
        <dbReference type="Rhea" id="RHEA:14838"/>
    </physiologicalReaction>
</comment>
<comment type="cofactor">
    <cofactor evidence="1">
        <name>FMN</name>
        <dbReference type="ChEBI" id="CHEBI:58210"/>
    </cofactor>
    <text evidence="1">Binds 1 FMN per subunit.</text>
</comment>
<comment type="biophysicochemical properties">
    <kinetics>
        <KM evidence="4">0.039 mM for (S)-lactate</KM>
        <KM evidence="4">0.233 mM for glycolate</KM>
        <Vmax evidence="4">12.73 umol/min/mg enzyme with (S)-lactate as substrate</Vmax>
        <Vmax evidence="4">0.049 umol/min/mg enzyme with glycolate as substrate</Vmax>
    </kinetics>
</comment>
<comment type="subunit">
    <text evidence="1">Homotetramer.</text>
</comment>
<comment type="induction">
    <text evidence="3">Up-regulated by high salinity conditions (NaCl exposure).</text>
</comment>
<comment type="disruption phenotype">
    <text evidence="4">Deletion of this gene does not affect growth in nitrate-containing medium under normal photorespiratory conditions. However, the mutant is unable to grow diazotrophically, caused by its inability to protect nitrogenase from O2 inhibition.</text>
</comment>
<comment type="similarity">
    <text evidence="6">Belongs to the FMN-dependent alpha-hydroxy acid dehydrogenase family.</text>
</comment>
<evidence type="ECO:0000250" key="1">
    <source>
        <dbReference type="UniProtKB" id="Q44467"/>
    </source>
</evidence>
<evidence type="ECO:0000255" key="2">
    <source>
        <dbReference type="PROSITE-ProRule" id="PRU00683"/>
    </source>
</evidence>
<evidence type="ECO:0000269" key="3">
    <source>
    </source>
</evidence>
<evidence type="ECO:0000269" key="4">
    <source>
    </source>
</evidence>
<evidence type="ECO:0000303" key="5">
    <source>
    </source>
</evidence>
<evidence type="ECO:0000305" key="6"/>
<evidence type="ECO:0000305" key="7">
    <source>
    </source>
</evidence>
<evidence type="ECO:0000312" key="8">
    <source>
        <dbReference type="EMBL" id="BAB77694.1"/>
    </source>
</evidence>
<organism>
    <name type="scientific">Nostoc sp. (strain PCC 7120 / SAG 25.82 / UTEX 2576)</name>
    <dbReference type="NCBI Taxonomy" id="103690"/>
    <lineage>
        <taxon>Bacteria</taxon>
        <taxon>Bacillati</taxon>
        <taxon>Cyanobacteriota</taxon>
        <taxon>Cyanophyceae</taxon>
        <taxon>Nostocales</taxon>
        <taxon>Nostocaceae</taxon>
        <taxon>Nostoc</taxon>
    </lineage>
</organism>
<feature type="chain" id="PRO_0000454868" description="L-lactate oxidase">
    <location>
        <begin position="1"/>
        <end position="365"/>
    </location>
</feature>
<feature type="domain" description="FMN hydroxy acid dehydrogenase" evidence="2">
    <location>
        <begin position="2"/>
        <end position="365"/>
    </location>
</feature>
<feature type="active site" description="Proton acceptor" evidence="1">
    <location>
        <position position="263"/>
    </location>
</feature>
<feature type="binding site" evidence="1">
    <location>
        <position position="28"/>
    </location>
    <ligand>
        <name>pyruvate</name>
        <dbReference type="ChEBI" id="CHEBI:15361"/>
    </ligand>
</feature>
<feature type="binding site" evidence="1">
    <location>
        <begin position="81"/>
        <end position="83"/>
    </location>
    <ligand>
        <name>FMN</name>
        <dbReference type="ChEBI" id="CHEBI:58210"/>
    </ligand>
</feature>
<feature type="binding site" evidence="1">
    <location>
        <position position="110"/>
    </location>
    <ligand>
        <name>FMN</name>
        <dbReference type="ChEBI" id="CHEBI:58210"/>
    </ligand>
</feature>
<feature type="binding site" evidence="1">
    <location>
        <position position="135"/>
    </location>
    <ligand>
        <name>FMN</name>
        <dbReference type="ChEBI" id="CHEBI:58210"/>
    </ligand>
</feature>
<feature type="binding site" evidence="1">
    <location>
        <position position="137"/>
    </location>
    <ligand>
        <name>pyruvate</name>
        <dbReference type="ChEBI" id="CHEBI:15361"/>
    </ligand>
</feature>
<feature type="binding site" evidence="1">
    <location>
        <position position="163"/>
    </location>
    <ligand>
        <name>FMN</name>
        <dbReference type="ChEBI" id="CHEBI:58210"/>
    </ligand>
</feature>
<feature type="binding site" evidence="1">
    <location>
        <position position="172"/>
    </location>
    <ligand>
        <name>pyruvate</name>
        <dbReference type="ChEBI" id="CHEBI:15361"/>
    </ligand>
</feature>
<feature type="binding site" evidence="1">
    <location>
        <position position="239"/>
    </location>
    <ligand>
        <name>FMN</name>
        <dbReference type="ChEBI" id="CHEBI:58210"/>
    </ligand>
</feature>
<feature type="binding site" evidence="1">
    <location>
        <position position="261"/>
    </location>
    <ligand>
        <name>FMN</name>
        <dbReference type="ChEBI" id="CHEBI:58210"/>
    </ligand>
</feature>
<feature type="binding site" evidence="1">
    <location>
        <position position="263"/>
    </location>
    <ligand>
        <name>pyruvate</name>
        <dbReference type="ChEBI" id="CHEBI:15361"/>
    </ligand>
</feature>
<feature type="binding site" evidence="1">
    <location>
        <position position="266"/>
    </location>
    <ligand>
        <name>pyruvate</name>
        <dbReference type="ChEBI" id="CHEBI:15361"/>
    </ligand>
</feature>
<feature type="binding site" evidence="1">
    <location>
        <begin position="294"/>
        <end position="298"/>
    </location>
    <ligand>
        <name>FMN</name>
        <dbReference type="ChEBI" id="CHEBI:58210"/>
    </ligand>
</feature>
<feature type="binding site" evidence="1">
    <location>
        <position position="318"/>
    </location>
    <ligand>
        <name>FMN</name>
        <dbReference type="ChEBI" id="CHEBI:58210"/>
    </ligand>
</feature>
<feature type="mutagenesis site" description="Increases oxidation activity with both L-lactate and glycolate. Shows a 6-fold decrease in the L-lactate/glycolate oxidase activity ratio." evidence="4">
    <original>M</original>
    <variation>T</variation>
    <location>
        <position position="82"/>
    </location>
</feature>
<feature type="mutagenesis site" description="Impairs oxidation of L-lactate. Shows a 2-fold decrease in the L-lactate/glycolate oxidase activity ratio." evidence="4">
    <original>L</original>
    <variation>W</variation>
    <location>
        <position position="112"/>
    </location>
</feature>
<feature type="mutagenesis site" description="Impairs oxidation of L-lactate. Shows a 27-fold decrease in the L-lactate/glycolate oxidase activity ratio." evidence="4">
    <original>F</original>
    <variation>V</variation>
    <location>
        <position position="212"/>
    </location>
</feature>
<accession>Q8Z0C8</accession>
<accession>D4P2J5</accession>
<sequence>MTAISSPINLFEYEQLAKTHLSQMAFDYYISGAGDEITLQENRAVFERIKLRPRMLVDVSQINLTTSVLGQPLQLPLLIAPMAFQCLAHTEGELATAMAAASAGTGMVLSTLSTKSLEEVAEVGSKFSPSLQWFQLYIHKDRGLTRALVERAYAAGYKALCLTVDAPVLGQRERDRRNEFVLPPGLHLANLTTISGLNIPHAPGESGLFTYFAQQLNPALTWDDLEWLQSLSPLPLVLKGILRGDDAARAVEYGAKAIVVSNHGGRQLDGAIASLDALPEIVAAVNGKAEVLLDGGIRRGTDIIKALAIGAQAVLIGRPVLWGLAVGGQAGVSHVISLLQKELNVAMALIGCSQLQDIDTSFLHL</sequence>
<dbReference type="EC" id="1.1.3.-" evidence="4"/>
<dbReference type="EC" id="1.2.3.5" evidence="4"/>
<dbReference type="EMBL" id="BA000019">
    <property type="protein sequence ID" value="BAB77694.1"/>
    <property type="molecule type" value="Genomic_DNA"/>
</dbReference>
<dbReference type="EMBL" id="GU560732">
    <property type="protein sequence ID" value="ADD64504.1"/>
    <property type="molecule type" value="Genomic_DNA"/>
</dbReference>
<dbReference type="PIR" id="AB1828">
    <property type="entry name" value="AB1828"/>
</dbReference>
<dbReference type="RefSeq" id="WP_010994347.1">
    <property type="nucleotide sequence ID" value="NZ_RSCN01000026.1"/>
</dbReference>
<dbReference type="SMR" id="Q8Z0C8"/>
<dbReference type="STRING" id="103690.gene:10492176"/>
<dbReference type="KEGG" id="ana:all0170"/>
<dbReference type="eggNOG" id="COG1304">
    <property type="taxonomic scope" value="Bacteria"/>
</dbReference>
<dbReference type="OrthoDB" id="9770452at2"/>
<dbReference type="BRENDA" id="1.1.3.2">
    <property type="organism ID" value="8113"/>
</dbReference>
<dbReference type="Proteomes" id="UP000002483">
    <property type="component" value="Chromosome"/>
</dbReference>
<dbReference type="GO" id="GO:0010181">
    <property type="term" value="F:FMN binding"/>
    <property type="evidence" value="ECO:0007669"/>
    <property type="project" value="InterPro"/>
</dbReference>
<dbReference type="GO" id="GO:0016491">
    <property type="term" value="F:oxidoreductase activity"/>
    <property type="evidence" value="ECO:0007669"/>
    <property type="project" value="UniProtKB-KW"/>
</dbReference>
<dbReference type="CDD" id="cd02809">
    <property type="entry name" value="alpha_hydroxyacid_oxid_FMN"/>
    <property type="match status" value="1"/>
</dbReference>
<dbReference type="FunFam" id="3.20.20.70:FF:000056">
    <property type="entry name" value="hydroxyacid oxidase 2"/>
    <property type="match status" value="1"/>
</dbReference>
<dbReference type="Gene3D" id="3.20.20.70">
    <property type="entry name" value="Aldolase class I"/>
    <property type="match status" value="1"/>
</dbReference>
<dbReference type="InterPro" id="IPR013785">
    <property type="entry name" value="Aldolase_TIM"/>
</dbReference>
<dbReference type="InterPro" id="IPR012133">
    <property type="entry name" value="Alpha-hydoxy_acid_DH_FMN"/>
</dbReference>
<dbReference type="InterPro" id="IPR000262">
    <property type="entry name" value="FMN-dep_DH"/>
</dbReference>
<dbReference type="InterPro" id="IPR037396">
    <property type="entry name" value="FMN_HAD"/>
</dbReference>
<dbReference type="InterPro" id="IPR008259">
    <property type="entry name" value="FMN_hydac_DH_AS"/>
</dbReference>
<dbReference type="PANTHER" id="PTHR10578:SF107">
    <property type="entry name" value="2-HYDROXYACID OXIDASE 1"/>
    <property type="match status" value="1"/>
</dbReference>
<dbReference type="PANTHER" id="PTHR10578">
    <property type="entry name" value="S -2-HYDROXY-ACID OXIDASE-RELATED"/>
    <property type="match status" value="1"/>
</dbReference>
<dbReference type="Pfam" id="PF01070">
    <property type="entry name" value="FMN_dh"/>
    <property type="match status" value="1"/>
</dbReference>
<dbReference type="PIRSF" id="PIRSF000138">
    <property type="entry name" value="Al-hdrx_acd_dh"/>
    <property type="match status" value="1"/>
</dbReference>
<dbReference type="SUPFAM" id="SSF51395">
    <property type="entry name" value="FMN-linked oxidoreductases"/>
    <property type="match status" value="1"/>
</dbReference>
<dbReference type="PROSITE" id="PS00557">
    <property type="entry name" value="FMN_HYDROXY_ACID_DH_1"/>
    <property type="match status" value="1"/>
</dbReference>
<dbReference type="PROSITE" id="PS51349">
    <property type="entry name" value="FMN_HYDROXY_ACID_DH_2"/>
    <property type="match status" value="1"/>
</dbReference>
<proteinExistence type="evidence at protein level"/>
<name>LOX_NOSS1</name>
<protein>
    <recommendedName>
        <fullName evidence="5">L-lactate oxidase</fullName>
        <shortName evidence="5">LOX</shortName>
        <ecNumber evidence="4">1.1.3.-</ecNumber>
    </recommendedName>
    <alternativeName>
        <fullName evidence="7">Glyoxylate oxidase</fullName>
        <ecNumber evidence="4">1.2.3.5</ecNumber>
    </alternativeName>
    <alternativeName>
        <fullName evidence="5">No-LOX</fullName>
    </alternativeName>
</protein>